<evidence type="ECO:0000255" key="1">
    <source>
        <dbReference type="HAMAP-Rule" id="MF_01159"/>
    </source>
</evidence>
<organism>
    <name type="scientific">Streptococcus pneumoniae serotype 19F (strain G54)</name>
    <dbReference type="NCBI Taxonomy" id="512566"/>
    <lineage>
        <taxon>Bacteria</taxon>
        <taxon>Bacillati</taxon>
        <taxon>Bacillota</taxon>
        <taxon>Bacilli</taxon>
        <taxon>Lactobacillales</taxon>
        <taxon>Streptococcaceae</taxon>
        <taxon>Streptococcus</taxon>
    </lineage>
</organism>
<accession>B5E439</accession>
<reference key="1">
    <citation type="journal article" date="2001" name="Microb. Drug Resist.">
        <title>Annotated draft genomic sequence from a Streptococcus pneumoniae type 19F clinical isolate.</title>
        <authorList>
            <person name="Dopazo J."/>
            <person name="Mendoza A."/>
            <person name="Herrero J."/>
            <person name="Caldara F."/>
            <person name="Humbert Y."/>
            <person name="Friedli L."/>
            <person name="Guerrier M."/>
            <person name="Grand-Schenk E."/>
            <person name="Gandin C."/>
            <person name="de Francesco M."/>
            <person name="Polissi A."/>
            <person name="Buell G."/>
            <person name="Feger G."/>
            <person name="Garcia E."/>
            <person name="Peitsch M."/>
            <person name="Garcia-Bustos J.F."/>
        </authorList>
    </citation>
    <scope>NUCLEOTIDE SEQUENCE [LARGE SCALE GENOMIC DNA]</scope>
    <source>
        <strain>G54</strain>
    </source>
</reference>
<reference key="2">
    <citation type="submission" date="2008-03" db="EMBL/GenBank/DDBJ databases">
        <title>Pneumococcal beta glucoside metabolism investigated by whole genome comparison.</title>
        <authorList>
            <person name="Mulas L."/>
            <person name="Trappetti C."/>
            <person name="Hakenbeck R."/>
            <person name="Iannelli F."/>
            <person name="Pozzi G."/>
            <person name="Davidsen T.M."/>
            <person name="Tettelin H."/>
            <person name="Oggioni M."/>
        </authorList>
    </citation>
    <scope>NUCLEOTIDE SEQUENCE [LARGE SCALE GENOMIC DNA]</scope>
    <source>
        <strain>G54</strain>
    </source>
</reference>
<name>YABA_STRP4</name>
<gene>
    <name evidence="1" type="primary">yabA</name>
    <name type="ordered locus">SPG_0863</name>
</gene>
<protein>
    <recommendedName>
        <fullName evidence="1">Replication initiation control protein YabA</fullName>
    </recommendedName>
</protein>
<proteinExistence type="inferred from homology"/>
<dbReference type="EMBL" id="CP001015">
    <property type="protein sequence ID" value="ACF55316.1"/>
    <property type="molecule type" value="Genomic_DNA"/>
</dbReference>
<dbReference type="SMR" id="B5E439"/>
<dbReference type="KEGG" id="spx:SPG_0863"/>
<dbReference type="HOGENOM" id="CLU_157169_0_0_9"/>
<dbReference type="GO" id="GO:0009295">
    <property type="term" value="C:nucleoid"/>
    <property type="evidence" value="ECO:0007669"/>
    <property type="project" value="UniProtKB-SubCell"/>
</dbReference>
<dbReference type="GO" id="GO:0006260">
    <property type="term" value="P:DNA replication"/>
    <property type="evidence" value="ECO:0007669"/>
    <property type="project" value="UniProtKB-UniRule"/>
</dbReference>
<dbReference type="HAMAP" id="MF_01159">
    <property type="entry name" value="YabA"/>
    <property type="match status" value="1"/>
</dbReference>
<dbReference type="InterPro" id="IPR010377">
    <property type="entry name" value="YabA"/>
</dbReference>
<dbReference type="NCBIfam" id="NF009640">
    <property type="entry name" value="PRK13169.1-1"/>
    <property type="match status" value="1"/>
</dbReference>
<dbReference type="Pfam" id="PF06156">
    <property type="entry name" value="YabA"/>
    <property type="match status" value="1"/>
</dbReference>
<dbReference type="PIRSF" id="PIRSF021439">
    <property type="entry name" value="DUF972"/>
    <property type="match status" value="1"/>
</dbReference>
<keyword id="KW-0963">Cytoplasm</keyword>
<keyword id="KW-0235">DNA replication</keyword>
<keyword id="KW-0236">DNA replication inhibitor</keyword>
<keyword id="KW-0479">Metal-binding</keyword>
<keyword id="KW-0862">Zinc</keyword>
<comment type="function">
    <text evidence="1">Involved in control of chromosome replication initiation. Inhibits the cooperative binding of DnaA to the oriC region, thus negatively regulating initiation of chromosome replication. Inhibits the ability of DnaA-ATP to form a helix on DNA; does not disassemble preformed DnaA-DNA helices. Decreases the residence time of DnaA on the chromosome at its binding sites (oriC, replication forks and promoter-binding sites). Tethers DnaA to the replication machinery via the DNA polymerase beta sliding clamp subunit (dnaN). Associates with oriC and other DnaA targets on the chromosome in a DnaA-dependent manner.</text>
</comment>
<comment type="cofactor">
    <cofactor evidence="1">
        <name>Zn(2+)</name>
        <dbReference type="ChEBI" id="CHEBI:29105"/>
    </cofactor>
    <text evidence="1">Binds 1 zinc ion per subunit.</text>
</comment>
<comment type="subunit">
    <text evidence="1">Homotetramer. Interacts with both DnaA and DnaN, acting as a bridge between these two proteins.</text>
</comment>
<comment type="subcellular location">
    <subcellularLocation>
        <location evidence="1">Cytoplasm</location>
        <location evidence="1">Nucleoid</location>
    </subcellularLocation>
    <text evidence="1">Localizes in tight foci, which correspond to the replisome at mid-cell throughout the cell cycle.</text>
</comment>
<comment type="similarity">
    <text evidence="1">Belongs to the YabA family.</text>
</comment>
<feature type="chain" id="PRO_1000137836" description="Replication initiation control protein YabA">
    <location>
        <begin position="1"/>
        <end position="105"/>
    </location>
</feature>
<feature type="binding site" evidence="1">
    <location>
        <position position="79"/>
    </location>
    <ligand>
        <name>Zn(2+)</name>
        <dbReference type="ChEBI" id="CHEBI:29105"/>
    </ligand>
</feature>
<feature type="binding site" evidence="1">
    <location>
        <position position="81"/>
    </location>
    <ligand>
        <name>Zn(2+)</name>
        <dbReference type="ChEBI" id="CHEBI:29105"/>
    </ligand>
</feature>
<feature type="binding site" evidence="1">
    <location>
        <position position="95"/>
    </location>
    <ligand>
        <name>Zn(2+)</name>
        <dbReference type="ChEBI" id="CHEBI:29105"/>
    </ligand>
</feature>
<feature type="binding site" evidence="1">
    <location>
        <position position="98"/>
    </location>
    <ligand>
        <name>Zn(2+)</name>
        <dbReference type="ChEBI" id="CHEBI:29105"/>
    </ligand>
</feature>
<sequence>MDKKELFDALDDFSQQLLVTLADVEAIKKNLKSLVEENTALRLENSKLRERLGEVEADAPVKAKHVRESVRRIYRDGFHVCNDFYGQRREQDEECMFCDELLYRE</sequence>